<proteinExistence type="inferred from homology"/>
<keyword id="KW-1003">Cell membrane</keyword>
<keyword id="KW-0378">Hydrolase</keyword>
<keyword id="KW-0449">Lipoprotein</keyword>
<keyword id="KW-0472">Membrane</keyword>
<keyword id="KW-0564">Palmitate</keyword>
<keyword id="KW-0645">Protease</keyword>
<keyword id="KW-1185">Reference proteome</keyword>
<keyword id="KW-0732">Signal</keyword>
<keyword id="KW-0788">Thiol protease</keyword>
<feature type="signal peptide" evidence="1">
    <location>
        <begin position="1"/>
        <end position="17"/>
    </location>
</feature>
<feature type="chain" id="PRO_0000019755" description="Probable endopeptidase NlpC homolog">
    <location>
        <begin position="18"/>
        <end position="183"/>
    </location>
</feature>
<feature type="domain" description="NlpC/P60" evidence="2">
    <location>
        <begin position="65"/>
        <end position="183"/>
    </location>
</feature>
<feature type="active site" description="Nucleophile" evidence="2">
    <location>
        <position position="95"/>
    </location>
</feature>
<feature type="active site" description="Proton acceptor" evidence="2">
    <location>
        <position position="143"/>
    </location>
</feature>
<feature type="active site" evidence="2">
    <location>
        <position position="155"/>
    </location>
</feature>
<feature type="lipid moiety-binding region" description="N-palmitoyl cysteine" evidence="1">
    <location>
        <position position="18"/>
    </location>
</feature>
<feature type="lipid moiety-binding region" description="S-diacylglycerol cysteine" evidence="1">
    <location>
        <position position="18"/>
    </location>
</feature>
<comment type="subcellular location">
    <subcellularLocation>
        <location evidence="3">Cell membrane</location>
        <topology evidence="3">Lipid-anchor</topology>
    </subcellularLocation>
</comment>
<comment type="similarity">
    <text evidence="2 3">Belongs to the peptidase C40 family.</text>
</comment>
<dbReference type="EC" id="3.4.-.-"/>
<dbReference type="EMBL" id="L42023">
    <property type="protein sequence ID" value="AAC23297.1"/>
    <property type="molecule type" value="Genomic_DNA"/>
</dbReference>
<dbReference type="PIR" id="H64173">
    <property type="entry name" value="H64173"/>
</dbReference>
<dbReference type="RefSeq" id="NP_439794.1">
    <property type="nucleotide sequence ID" value="NC_000907.1"/>
</dbReference>
<dbReference type="SMR" id="P45296"/>
<dbReference type="STRING" id="71421.HI_1652"/>
<dbReference type="MEROPS" id="C40.004"/>
<dbReference type="DNASU" id="950494"/>
<dbReference type="EnsemblBacteria" id="AAC23297">
    <property type="protein sequence ID" value="AAC23297"/>
    <property type="gene ID" value="HI_1652"/>
</dbReference>
<dbReference type="KEGG" id="hin:HI_1652"/>
<dbReference type="PATRIC" id="fig|71421.8.peg.1729"/>
<dbReference type="eggNOG" id="COG0791">
    <property type="taxonomic scope" value="Bacteria"/>
</dbReference>
<dbReference type="HOGENOM" id="CLU_016043_9_1_6"/>
<dbReference type="OrthoDB" id="9807055at2"/>
<dbReference type="PhylomeDB" id="P45296"/>
<dbReference type="BioCyc" id="HINF71421:G1GJ1-1669-MONOMER"/>
<dbReference type="Proteomes" id="UP000000579">
    <property type="component" value="Chromosome"/>
</dbReference>
<dbReference type="GO" id="GO:0005886">
    <property type="term" value="C:plasma membrane"/>
    <property type="evidence" value="ECO:0007669"/>
    <property type="project" value="UniProtKB-SubCell"/>
</dbReference>
<dbReference type="GO" id="GO:0008234">
    <property type="term" value="F:cysteine-type peptidase activity"/>
    <property type="evidence" value="ECO:0007669"/>
    <property type="project" value="UniProtKB-KW"/>
</dbReference>
<dbReference type="GO" id="GO:0004175">
    <property type="term" value="F:endopeptidase activity"/>
    <property type="evidence" value="ECO:0000318"/>
    <property type="project" value="GO_Central"/>
</dbReference>
<dbReference type="GO" id="GO:0009254">
    <property type="term" value="P:peptidoglycan turnover"/>
    <property type="evidence" value="ECO:0000318"/>
    <property type="project" value="GO_Central"/>
</dbReference>
<dbReference type="GO" id="GO:0006508">
    <property type="term" value="P:proteolysis"/>
    <property type="evidence" value="ECO:0007669"/>
    <property type="project" value="UniProtKB-KW"/>
</dbReference>
<dbReference type="Gene3D" id="3.90.1720.10">
    <property type="entry name" value="endopeptidase domain like (from Nostoc punctiforme)"/>
    <property type="match status" value="1"/>
</dbReference>
<dbReference type="InterPro" id="IPR052062">
    <property type="entry name" value="Murein_DD/LD_carboxypeptidase"/>
</dbReference>
<dbReference type="InterPro" id="IPR000064">
    <property type="entry name" value="NLP_P60_dom"/>
</dbReference>
<dbReference type="InterPro" id="IPR038765">
    <property type="entry name" value="Papain-like_cys_pep_sf"/>
</dbReference>
<dbReference type="PANTHER" id="PTHR47360">
    <property type="entry name" value="MUREIN DD-ENDOPEPTIDASE MEPS/MUREIN LD-CARBOXYPEPTIDASE"/>
    <property type="match status" value="1"/>
</dbReference>
<dbReference type="PANTHER" id="PTHR47360:SF3">
    <property type="entry name" value="MUREIN DD-ENDOPEPTIDASE MEPS_MUREIN LD-CARBOXYPEPTIDASE"/>
    <property type="match status" value="1"/>
</dbReference>
<dbReference type="Pfam" id="PF00877">
    <property type="entry name" value="NLPC_P60"/>
    <property type="match status" value="1"/>
</dbReference>
<dbReference type="SUPFAM" id="SSF54001">
    <property type="entry name" value="Cysteine proteinases"/>
    <property type="match status" value="1"/>
</dbReference>
<dbReference type="PROSITE" id="PS51935">
    <property type="entry name" value="NLPC_P60"/>
    <property type="match status" value="1"/>
</dbReference>
<dbReference type="PROSITE" id="PS51257">
    <property type="entry name" value="PROKAR_LIPOPROTEIN"/>
    <property type="match status" value="1"/>
</dbReference>
<evidence type="ECO:0000255" key="1">
    <source>
        <dbReference type="PROSITE-ProRule" id="PRU00303"/>
    </source>
</evidence>
<evidence type="ECO:0000255" key="2">
    <source>
        <dbReference type="PROSITE-ProRule" id="PRU01284"/>
    </source>
</evidence>
<evidence type="ECO:0000305" key="3"/>
<reference key="1">
    <citation type="journal article" date="1995" name="Science">
        <title>Whole-genome random sequencing and assembly of Haemophilus influenzae Rd.</title>
        <authorList>
            <person name="Fleischmann R.D."/>
            <person name="Adams M.D."/>
            <person name="White O."/>
            <person name="Clayton R.A."/>
            <person name="Kirkness E.F."/>
            <person name="Kerlavage A.R."/>
            <person name="Bult C.J."/>
            <person name="Tomb J.-F."/>
            <person name="Dougherty B.A."/>
            <person name="Merrick J.M."/>
            <person name="McKenney K."/>
            <person name="Sutton G.G."/>
            <person name="FitzHugh W."/>
            <person name="Fields C.A."/>
            <person name="Gocayne J.D."/>
            <person name="Scott J.D."/>
            <person name="Shirley R."/>
            <person name="Liu L.-I."/>
            <person name="Glodek A."/>
            <person name="Kelley J.M."/>
            <person name="Weidman J.F."/>
            <person name="Phillips C.A."/>
            <person name="Spriggs T."/>
            <person name="Hedblom E."/>
            <person name="Cotton M.D."/>
            <person name="Utterback T.R."/>
            <person name="Hanna M.C."/>
            <person name="Nguyen D.T."/>
            <person name="Saudek D.M."/>
            <person name="Brandon R.C."/>
            <person name="Fine L.D."/>
            <person name="Fritchman J.L."/>
            <person name="Fuhrmann J.L."/>
            <person name="Geoghagen N.S.M."/>
            <person name="Gnehm C.L."/>
            <person name="McDonald L.A."/>
            <person name="Small K.V."/>
            <person name="Fraser C.M."/>
            <person name="Smith H.O."/>
            <person name="Venter J.C."/>
        </authorList>
    </citation>
    <scope>NUCLEOTIDE SEQUENCE [LARGE SCALE GENOMIC DNA]</scope>
    <source>
        <strain>ATCC 51907 / DSM 11121 / KW20 / Rd</strain>
    </source>
</reference>
<gene>
    <name type="primary">nlpC</name>
    <name type="ordered locus">HI_1652</name>
</gene>
<organism>
    <name type="scientific">Haemophilus influenzae (strain ATCC 51907 / DSM 11121 / KW20 / Rd)</name>
    <dbReference type="NCBI Taxonomy" id="71421"/>
    <lineage>
        <taxon>Bacteria</taxon>
        <taxon>Pseudomonadati</taxon>
        <taxon>Pseudomonadota</taxon>
        <taxon>Gammaproteobacteria</taxon>
        <taxon>Pasteurellales</taxon>
        <taxon>Pasteurellaceae</taxon>
        <taxon>Haemophilus</taxon>
    </lineage>
</organism>
<protein>
    <recommendedName>
        <fullName>Probable endopeptidase NlpC homolog</fullName>
        <ecNumber>3.4.-.-</ecNumber>
    </recommendedName>
    <alternativeName>
        <fullName>Probable lipoprotein NlpC homolog</fullName>
    </alternativeName>
</protein>
<name>NLPC_HAEIN</name>
<sequence length="183" mass="20586">MLKRILVIIGLAVLATACSNAPRTVSHQVISENDDIQLTGLINNLEKDNRTGIFHKVRTNRSSALMGDKALASVYNEWVGTRYRMGGTTKRGIDCSAFMQTTFSEVFGIELPRSTAEQRHLGRKINKSELKKGDLVFFRKNNHVGVYIGNNQFMHASTGQGVTISSLDEKYWARTYTQSRRIM</sequence>
<accession>P45296</accession>